<name>RL20_KLEP7</name>
<feature type="chain" id="PRO_1000048996" description="Large ribosomal subunit protein bL20">
    <location>
        <begin position="1"/>
        <end position="118"/>
    </location>
</feature>
<keyword id="KW-0687">Ribonucleoprotein</keyword>
<keyword id="KW-0689">Ribosomal protein</keyword>
<keyword id="KW-0694">RNA-binding</keyword>
<keyword id="KW-0699">rRNA-binding</keyword>
<reference key="1">
    <citation type="submission" date="2006-09" db="EMBL/GenBank/DDBJ databases">
        <authorList>
            <consortium name="The Klebsiella pneumonia Genome Sequencing Project"/>
            <person name="McClelland M."/>
            <person name="Sanderson E.K."/>
            <person name="Spieth J."/>
            <person name="Clifton W.S."/>
            <person name="Latreille P."/>
            <person name="Sabo A."/>
            <person name="Pepin K."/>
            <person name="Bhonagiri V."/>
            <person name="Porwollik S."/>
            <person name="Ali J."/>
            <person name="Wilson R.K."/>
        </authorList>
    </citation>
    <scope>NUCLEOTIDE SEQUENCE [LARGE SCALE GENOMIC DNA]</scope>
    <source>
        <strain>ATCC 700721 / MGH 78578</strain>
    </source>
</reference>
<protein>
    <recommendedName>
        <fullName evidence="1">Large ribosomal subunit protein bL20</fullName>
    </recommendedName>
    <alternativeName>
        <fullName evidence="2">50S ribosomal protein L20</fullName>
    </alternativeName>
</protein>
<gene>
    <name evidence="1" type="primary">rplT</name>
    <name type="ordered locus">KPN78578_21440</name>
    <name type="ORF">KPN_02177</name>
</gene>
<organism>
    <name type="scientific">Klebsiella pneumoniae subsp. pneumoniae (strain ATCC 700721 / MGH 78578)</name>
    <dbReference type="NCBI Taxonomy" id="272620"/>
    <lineage>
        <taxon>Bacteria</taxon>
        <taxon>Pseudomonadati</taxon>
        <taxon>Pseudomonadota</taxon>
        <taxon>Gammaproteobacteria</taxon>
        <taxon>Enterobacterales</taxon>
        <taxon>Enterobacteriaceae</taxon>
        <taxon>Klebsiella/Raoultella group</taxon>
        <taxon>Klebsiella</taxon>
        <taxon>Klebsiella pneumoniae complex</taxon>
    </lineage>
</organism>
<accession>A6TAI4</accession>
<comment type="function">
    <text evidence="1">Binds directly to 23S ribosomal RNA and is necessary for the in vitro assembly process of the 50S ribosomal subunit. It is not involved in the protein synthesizing functions of that subunit.</text>
</comment>
<comment type="similarity">
    <text evidence="1">Belongs to the bacterial ribosomal protein bL20 family.</text>
</comment>
<sequence>MARVKRGVIARARHKKILKQAKGYYGARSRVYRVAFQAVIKAGQYAYRDRRQRKRQFRQLWIARINAAARQNGISYSKFINGLKKASVEIDRKILADIAVFDKVAFTALVEKAKAALA</sequence>
<dbReference type="EMBL" id="CP000647">
    <property type="protein sequence ID" value="ABR77605.1"/>
    <property type="molecule type" value="Genomic_DNA"/>
</dbReference>
<dbReference type="RefSeq" id="WP_000124850.1">
    <property type="nucleotide sequence ID" value="NC_009648.1"/>
</dbReference>
<dbReference type="SMR" id="A6TAI4"/>
<dbReference type="STRING" id="272620.KPN_02177"/>
<dbReference type="jPOST" id="A6TAI4"/>
<dbReference type="PaxDb" id="272620-KPN_02177"/>
<dbReference type="EnsemblBacteria" id="ABR77605">
    <property type="protein sequence ID" value="ABR77605"/>
    <property type="gene ID" value="KPN_02177"/>
</dbReference>
<dbReference type="GeneID" id="98388757"/>
<dbReference type="KEGG" id="kpn:KPN_02177"/>
<dbReference type="HOGENOM" id="CLU_123265_0_1_6"/>
<dbReference type="Proteomes" id="UP000000265">
    <property type="component" value="Chromosome"/>
</dbReference>
<dbReference type="GO" id="GO:1990904">
    <property type="term" value="C:ribonucleoprotein complex"/>
    <property type="evidence" value="ECO:0007669"/>
    <property type="project" value="UniProtKB-KW"/>
</dbReference>
<dbReference type="GO" id="GO:0005840">
    <property type="term" value="C:ribosome"/>
    <property type="evidence" value="ECO:0007669"/>
    <property type="project" value="UniProtKB-KW"/>
</dbReference>
<dbReference type="GO" id="GO:0019843">
    <property type="term" value="F:rRNA binding"/>
    <property type="evidence" value="ECO:0007669"/>
    <property type="project" value="UniProtKB-UniRule"/>
</dbReference>
<dbReference type="GO" id="GO:0003735">
    <property type="term" value="F:structural constituent of ribosome"/>
    <property type="evidence" value="ECO:0007669"/>
    <property type="project" value="InterPro"/>
</dbReference>
<dbReference type="GO" id="GO:0000027">
    <property type="term" value="P:ribosomal large subunit assembly"/>
    <property type="evidence" value="ECO:0007669"/>
    <property type="project" value="UniProtKB-UniRule"/>
</dbReference>
<dbReference type="GO" id="GO:0006412">
    <property type="term" value="P:translation"/>
    <property type="evidence" value="ECO:0007669"/>
    <property type="project" value="InterPro"/>
</dbReference>
<dbReference type="CDD" id="cd07026">
    <property type="entry name" value="Ribosomal_L20"/>
    <property type="match status" value="1"/>
</dbReference>
<dbReference type="FunFam" id="1.10.1900.20:FF:000001">
    <property type="entry name" value="50S ribosomal protein L20"/>
    <property type="match status" value="1"/>
</dbReference>
<dbReference type="Gene3D" id="6.10.160.10">
    <property type="match status" value="1"/>
</dbReference>
<dbReference type="Gene3D" id="1.10.1900.20">
    <property type="entry name" value="Ribosomal protein L20"/>
    <property type="match status" value="1"/>
</dbReference>
<dbReference type="HAMAP" id="MF_00382">
    <property type="entry name" value="Ribosomal_bL20"/>
    <property type="match status" value="1"/>
</dbReference>
<dbReference type="InterPro" id="IPR005813">
    <property type="entry name" value="Ribosomal_bL20"/>
</dbReference>
<dbReference type="InterPro" id="IPR049946">
    <property type="entry name" value="RIBOSOMAL_L20_CS"/>
</dbReference>
<dbReference type="InterPro" id="IPR035566">
    <property type="entry name" value="Ribosomal_protein_bL20_C"/>
</dbReference>
<dbReference type="NCBIfam" id="TIGR01032">
    <property type="entry name" value="rplT_bact"/>
    <property type="match status" value="1"/>
</dbReference>
<dbReference type="PANTHER" id="PTHR10986">
    <property type="entry name" value="39S RIBOSOMAL PROTEIN L20"/>
    <property type="match status" value="1"/>
</dbReference>
<dbReference type="Pfam" id="PF00453">
    <property type="entry name" value="Ribosomal_L20"/>
    <property type="match status" value="1"/>
</dbReference>
<dbReference type="PRINTS" id="PR00062">
    <property type="entry name" value="RIBOSOMALL20"/>
</dbReference>
<dbReference type="SUPFAM" id="SSF74731">
    <property type="entry name" value="Ribosomal protein L20"/>
    <property type="match status" value="1"/>
</dbReference>
<dbReference type="PROSITE" id="PS00937">
    <property type="entry name" value="RIBOSOMAL_L20"/>
    <property type="match status" value="1"/>
</dbReference>
<evidence type="ECO:0000255" key="1">
    <source>
        <dbReference type="HAMAP-Rule" id="MF_00382"/>
    </source>
</evidence>
<evidence type="ECO:0000305" key="2"/>
<proteinExistence type="inferred from homology"/>